<name>UPPP_SHESW</name>
<feature type="chain" id="PRO_0000290767" description="Undecaprenyl-diphosphatase">
    <location>
        <begin position="1"/>
        <end position="266"/>
    </location>
</feature>
<feature type="transmembrane region" description="Helical" evidence="1">
    <location>
        <begin position="1"/>
        <end position="21"/>
    </location>
</feature>
<feature type="transmembrane region" description="Helical" evidence="1">
    <location>
        <begin position="39"/>
        <end position="59"/>
    </location>
</feature>
<feature type="transmembrane region" description="Helical" evidence="1">
    <location>
        <begin position="87"/>
        <end position="107"/>
    </location>
</feature>
<feature type="transmembrane region" description="Helical" evidence="1">
    <location>
        <begin position="111"/>
        <end position="131"/>
    </location>
</feature>
<feature type="transmembrane region" description="Helical" evidence="1">
    <location>
        <begin position="149"/>
        <end position="169"/>
    </location>
</feature>
<feature type="transmembrane region" description="Helical" evidence="1">
    <location>
        <begin position="183"/>
        <end position="203"/>
    </location>
</feature>
<feature type="transmembrane region" description="Helical" evidence="1">
    <location>
        <begin position="218"/>
        <end position="238"/>
    </location>
</feature>
<feature type="transmembrane region" description="Helical" evidence="1">
    <location>
        <begin position="246"/>
        <end position="266"/>
    </location>
</feature>
<sequence length="266" mass="29267">MDTFQVIILALIQGLTEFLPISSSAHLILPAELLGWEDQGLSFDVAVNTGSLLAVVIYFRHELWNMFTAWIASIFKGKQSDDSKLAWWIILATLPAVFFGFMAKDFIETHLRSAEVIAVTTIVFGLLLWWADKMSHQDLTVYQTGWRKALLIGFAQALALIPGTSRSGATMTAALMLGLSRDAAARFSFLMSVPVSLGAAILVGKDLSESSLPIDYQALTLGTLVSFVAAYLCIHYFLKIISRMGMTPFVIYRLILGAVLCGFIFL</sequence>
<comment type="function">
    <text evidence="1">Catalyzes the dephosphorylation of undecaprenyl diphosphate (UPP). Confers resistance to bacitracin.</text>
</comment>
<comment type="catalytic activity">
    <reaction evidence="1">
        <text>di-trans,octa-cis-undecaprenyl diphosphate + H2O = di-trans,octa-cis-undecaprenyl phosphate + phosphate + H(+)</text>
        <dbReference type="Rhea" id="RHEA:28094"/>
        <dbReference type="ChEBI" id="CHEBI:15377"/>
        <dbReference type="ChEBI" id="CHEBI:15378"/>
        <dbReference type="ChEBI" id="CHEBI:43474"/>
        <dbReference type="ChEBI" id="CHEBI:58405"/>
        <dbReference type="ChEBI" id="CHEBI:60392"/>
        <dbReference type="EC" id="3.6.1.27"/>
    </reaction>
</comment>
<comment type="subcellular location">
    <subcellularLocation>
        <location evidence="1">Cell inner membrane</location>
        <topology evidence="1">Multi-pass membrane protein</topology>
    </subcellularLocation>
</comment>
<comment type="miscellaneous">
    <text>Bacitracin is thought to be involved in the inhibition of peptidoglycan synthesis by sequestering undecaprenyl diphosphate, thereby reducing the pool of lipid carrier available.</text>
</comment>
<comment type="similarity">
    <text evidence="1">Belongs to the UppP family.</text>
</comment>
<evidence type="ECO:0000255" key="1">
    <source>
        <dbReference type="HAMAP-Rule" id="MF_01006"/>
    </source>
</evidence>
<organism>
    <name type="scientific">Shewanella sp. (strain W3-18-1)</name>
    <dbReference type="NCBI Taxonomy" id="351745"/>
    <lineage>
        <taxon>Bacteria</taxon>
        <taxon>Pseudomonadati</taxon>
        <taxon>Pseudomonadota</taxon>
        <taxon>Gammaproteobacteria</taxon>
        <taxon>Alteromonadales</taxon>
        <taxon>Shewanellaceae</taxon>
        <taxon>Shewanella</taxon>
    </lineage>
</organism>
<dbReference type="EC" id="3.6.1.27" evidence="1"/>
<dbReference type="EMBL" id="CP000503">
    <property type="protein sequence ID" value="ABM25869.1"/>
    <property type="molecule type" value="Genomic_DNA"/>
</dbReference>
<dbReference type="RefSeq" id="WP_011790321.1">
    <property type="nucleotide sequence ID" value="NC_008750.1"/>
</dbReference>
<dbReference type="SMR" id="A1RMH4"/>
<dbReference type="KEGG" id="shw:Sputw3181_3052"/>
<dbReference type="HOGENOM" id="CLU_060296_1_0_6"/>
<dbReference type="Proteomes" id="UP000002597">
    <property type="component" value="Chromosome"/>
</dbReference>
<dbReference type="GO" id="GO:0005886">
    <property type="term" value="C:plasma membrane"/>
    <property type="evidence" value="ECO:0007669"/>
    <property type="project" value="UniProtKB-SubCell"/>
</dbReference>
<dbReference type="GO" id="GO:0050380">
    <property type="term" value="F:undecaprenyl-diphosphatase activity"/>
    <property type="evidence" value="ECO:0007669"/>
    <property type="project" value="UniProtKB-UniRule"/>
</dbReference>
<dbReference type="GO" id="GO:0071555">
    <property type="term" value="P:cell wall organization"/>
    <property type="evidence" value="ECO:0007669"/>
    <property type="project" value="UniProtKB-KW"/>
</dbReference>
<dbReference type="GO" id="GO:0009252">
    <property type="term" value="P:peptidoglycan biosynthetic process"/>
    <property type="evidence" value="ECO:0007669"/>
    <property type="project" value="UniProtKB-KW"/>
</dbReference>
<dbReference type="GO" id="GO:0008360">
    <property type="term" value="P:regulation of cell shape"/>
    <property type="evidence" value="ECO:0007669"/>
    <property type="project" value="UniProtKB-KW"/>
</dbReference>
<dbReference type="GO" id="GO:0046677">
    <property type="term" value="P:response to antibiotic"/>
    <property type="evidence" value="ECO:0007669"/>
    <property type="project" value="UniProtKB-UniRule"/>
</dbReference>
<dbReference type="HAMAP" id="MF_01006">
    <property type="entry name" value="Undec_diphosphatase"/>
    <property type="match status" value="1"/>
</dbReference>
<dbReference type="InterPro" id="IPR003824">
    <property type="entry name" value="UppP"/>
</dbReference>
<dbReference type="NCBIfam" id="NF001393">
    <property type="entry name" value="PRK00281.2-4"/>
    <property type="match status" value="1"/>
</dbReference>
<dbReference type="NCBIfam" id="TIGR00753">
    <property type="entry name" value="undec_PP_bacA"/>
    <property type="match status" value="1"/>
</dbReference>
<dbReference type="PANTHER" id="PTHR30622">
    <property type="entry name" value="UNDECAPRENYL-DIPHOSPHATASE"/>
    <property type="match status" value="1"/>
</dbReference>
<dbReference type="PANTHER" id="PTHR30622:SF4">
    <property type="entry name" value="UNDECAPRENYL-DIPHOSPHATASE"/>
    <property type="match status" value="1"/>
</dbReference>
<dbReference type="Pfam" id="PF02673">
    <property type="entry name" value="BacA"/>
    <property type="match status" value="1"/>
</dbReference>
<reference key="1">
    <citation type="submission" date="2006-12" db="EMBL/GenBank/DDBJ databases">
        <title>Complete sequence of Shewanella sp. W3-18-1.</title>
        <authorList>
            <consortium name="US DOE Joint Genome Institute"/>
            <person name="Copeland A."/>
            <person name="Lucas S."/>
            <person name="Lapidus A."/>
            <person name="Barry K."/>
            <person name="Detter J.C."/>
            <person name="Glavina del Rio T."/>
            <person name="Hammon N."/>
            <person name="Israni S."/>
            <person name="Dalin E."/>
            <person name="Tice H."/>
            <person name="Pitluck S."/>
            <person name="Chain P."/>
            <person name="Malfatti S."/>
            <person name="Shin M."/>
            <person name="Vergez L."/>
            <person name="Schmutz J."/>
            <person name="Larimer F."/>
            <person name="Land M."/>
            <person name="Hauser L."/>
            <person name="Kyrpides N."/>
            <person name="Lykidis A."/>
            <person name="Tiedje J."/>
            <person name="Richardson P."/>
        </authorList>
    </citation>
    <scope>NUCLEOTIDE SEQUENCE [LARGE SCALE GENOMIC DNA]</scope>
    <source>
        <strain>W3-18-1</strain>
    </source>
</reference>
<proteinExistence type="inferred from homology"/>
<protein>
    <recommendedName>
        <fullName evidence="1">Undecaprenyl-diphosphatase</fullName>
        <ecNumber evidence="1">3.6.1.27</ecNumber>
    </recommendedName>
    <alternativeName>
        <fullName evidence="1">Bacitracin resistance protein</fullName>
    </alternativeName>
    <alternativeName>
        <fullName evidence="1">Undecaprenyl pyrophosphate phosphatase</fullName>
    </alternativeName>
</protein>
<accession>A1RMH4</accession>
<keyword id="KW-0046">Antibiotic resistance</keyword>
<keyword id="KW-0997">Cell inner membrane</keyword>
<keyword id="KW-1003">Cell membrane</keyword>
<keyword id="KW-0133">Cell shape</keyword>
<keyword id="KW-0961">Cell wall biogenesis/degradation</keyword>
<keyword id="KW-0378">Hydrolase</keyword>
<keyword id="KW-0472">Membrane</keyword>
<keyword id="KW-0573">Peptidoglycan synthesis</keyword>
<keyword id="KW-0812">Transmembrane</keyword>
<keyword id="KW-1133">Transmembrane helix</keyword>
<gene>
    <name evidence="1" type="primary">uppP</name>
    <name type="ordered locus">Sputw3181_3052</name>
</gene>